<comment type="function">
    <text evidence="2">Regulatory subunit of casein kinase II/CK2 (By similarity). As part of the kinase complex regulates the basal catalytic activity of the alpha subunit a constitutively active serine/threonine-protein kinase that phosphorylates a large number of substrates containing acidic residues C-terminal to the phosphorylated serine or threonine (By similarity).</text>
</comment>
<comment type="subunit">
    <text evidence="1">Tetramer composed of two alpha chains, one beta chain and one beta' chain.</text>
</comment>
<comment type="PTM">
    <text evidence="2">Phosphorylated by alpha subunit.</text>
</comment>
<comment type="similarity">
    <text evidence="4">Belongs to the casein kinase 2 subunit beta family.</text>
</comment>
<protein>
    <recommendedName>
        <fullName>Casein kinase II subunit beta-2</fullName>
        <shortName>CK II beta-2</shortName>
    </recommendedName>
</protein>
<gene>
    <name type="primary">ckb-2</name>
    <name type="synonym">ckb2</name>
    <name type="ORF">NCU02754</name>
</gene>
<dbReference type="EMBL" id="AF494378">
    <property type="protein sequence ID" value="AAM14626.1"/>
    <property type="molecule type" value="mRNA"/>
</dbReference>
<dbReference type="EMBL" id="CM002236">
    <property type="protein sequence ID" value="EDO65315.1"/>
    <property type="molecule type" value="Genomic_DNA"/>
</dbReference>
<dbReference type="RefSeq" id="XP_001728406.1">
    <property type="nucleotide sequence ID" value="XM_001728354.2"/>
</dbReference>
<dbReference type="SMR" id="Q8TG11"/>
<dbReference type="FunCoup" id="Q8TG11">
    <property type="interactions" value="918"/>
</dbReference>
<dbReference type="STRING" id="367110.Q8TG11"/>
<dbReference type="PaxDb" id="5141-EFNCRP00000001947"/>
<dbReference type="EnsemblFungi" id="EDO65315">
    <property type="protein sequence ID" value="EDO65315"/>
    <property type="gene ID" value="NCU02754"/>
</dbReference>
<dbReference type="GeneID" id="5847739"/>
<dbReference type="KEGG" id="ncr:NCU02754"/>
<dbReference type="VEuPathDB" id="FungiDB:NCU02754"/>
<dbReference type="HOGENOM" id="CLU_034027_3_2_1"/>
<dbReference type="InParanoid" id="Q8TG11"/>
<dbReference type="OrthoDB" id="3971593at2759"/>
<dbReference type="Proteomes" id="UP000001805">
    <property type="component" value="Chromosome 1, Linkage Group I"/>
</dbReference>
<dbReference type="GO" id="GO:0005737">
    <property type="term" value="C:cytoplasm"/>
    <property type="evidence" value="ECO:0000318"/>
    <property type="project" value="GO_Central"/>
</dbReference>
<dbReference type="GO" id="GO:0005956">
    <property type="term" value="C:protein kinase CK2 complex"/>
    <property type="evidence" value="ECO:0000318"/>
    <property type="project" value="GO_Central"/>
</dbReference>
<dbReference type="GO" id="GO:0034456">
    <property type="term" value="C:UTP-C complex"/>
    <property type="evidence" value="ECO:0000318"/>
    <property type="project" value="GO_Central"/>
</dbReference>
<dbReference type="GO" id="GO:0019887">
    <property type="term" value="F:protein kinase regulator activity"/>
    <property type="evidence" value="ECO:0000318"/>
    <property type="project" value="GO_Central"/>
</dbReference>
<dbReference type="GO" id="GO:0006359">
    <property type="term" value="P:regulation of transcription by RNA polymerase III"/>
    <property type="evidence" value="ECO:0000318"/>
    <property type="project" value="GO_Central"/>
</dbReference>
<dbReference type="FunFam" id="1.10.1820.10:FF:000003">
    <property type="entry name" value="Casein kinase II subunit beta"/>
    <property type="match status" value="1"/>
</dbReference>
<dbReference type="FunFam" id="2.20.25.20:FF:000001">
    <property type="entry name" value="Casein kinase II subunit beta"/>
    <property type="match status" value="1"/>
</dbReference>
<dbReference type="Gene3D" id="2.20.25.20">
    <property type="match status" value="1"/>
</dbReference>
<dbReference type="Gene3D" id="1.10.1820.10">
    <property type="entry name" value="protein kinase ck2 holoenzyme, chain C, domain 1"/>
    <property type="match status" value="1"/>
</dbReference>
<dbReference type="InterPro" id="IPR016149">
    <property type="entry name" value="Casein_kin_II_reg-sub_N"/>
</dbReference>
<dbReference type="InterPro" id="IPR035991">
    <property type="entry name" value="Casein_kinase_II_beta-like"/>
</dbReference>
<dbReference type="InterPro" id="IPR000704">
    <property type="entry name" value="Casein_kinase_II_reg-sub"/>
</dbReference>
<dbReference type="PANTHER" id="PTHR11740">
    <property type="entry name" value="CASEIN KINASE II SUBUNIT BETA"/>
    <property type="match status" value="1"/>
</dbReference>
<dbReference type="PANTHER" id="PTHR11740:SF39">
    <property type="entry name" value="CASEIN KINASE II SUBUNIT BETA"/>
    <property type="match status" value="1"/>
</dbReference>
<dbReference type="Pfam" id="PF01214">
    <property type="entry name" value="CK_II_beta"/>
    <property type="match status" value="1"/>
</dbReference>
<dbReference type="PRINTS" id="PR00472">
    <property type="entry name" value="CASNKINASEII"/>
</dbReference>
<dbReference type="SMART" id="SM01085">
    <property type="entry name" value="CK_II_beta"/>
    <property type="match status" value="1"/>
</dbReference>
<dbReference type="SUPFAM" id="SSF57798">
    <property type="entry name" value="Casein kinase II beta subunit"/>
    <property type="match status" value="1"/>
</dbReference>
<dbReference type="PROSITE" id="PS01101">
    <property type="entry name" value="CK2_BETA"/>
    <property type="match status" value="1"/>
</dbReference>
<organism>
    <name type="scientific">Neurospora crassa (strain ATCC 24698 / 74-OR23-1A / CBS 708.71 / DSM 1257 / FGSC 987)</name>
    <dbReference type="NCBI Taxonomy" id="367110"/>
    <lineage>
        <taxon>Eukaryota</taxon>
        <taxon>Fungi</taxon>
        <taxon>Dikarya</taxon>
        <taxon>Ascomycota</taxon>
        <taxon>Pezizomycotina</taxon>
        <taxon>Sordariomycetes</taxon>
        <taxon>Sordariomycetidae</taxon>
        <taxon>Sordariales</taxon>
        <taxon>Sordariaceae</taxon>
        <taxon>Neurospora</taxon>
    </lineage>
</organism>
<feature type="chain" id="PRO_0000068254" description="Casein kinase II subunit beta-2">
    <location>
        <begin position="1"/>
        <end position="285"/>
    </location>
</feature>
<feature type="region of interest" description="Disordered" evidence="3">
    <location>
        <begin position="226"/>
        <end position="285"/>
    </location>
</feature>
<feature type="compositionally biased region" description="Acidic residues" evidence="3">
    <location>
        <begin position="229"/>
        <end position="259"/>
    </location>
</feature>
<feature type="compositionally biased region" description="Low complexity" evidence="3">
    <location>
        <begin position="260"/>
        <end position="272"/>
    </location>
</feature>
<feature type="compositionally biased region" description="Gly residues" evidence="3">
    <location>
        <begin position="273"/>
        <end position="285"/>
    </location>
</feature>
<proteinExistence type="evidence at transcript level"/>
<evidence type="ECO:0000250" key="1">
    <source>
        <dbReference type="UniProtKB" id="P38930"/>
    </source>
</evidence>
<evidence type="ECO:0000250" key="2">
    <source>
        <dbReference type="UniProtKB" id="P67870"/>
    </source>
</evidence>
<evidence type="ECO:0000256" key="3">
    <source>
        <dbReference type="SAM" id="MobiDB-lite"/>
    </source>
</evidence>
<evidence type="ECO:0000305" key="4"/>
<name>CSK2C_NEUCR</name>
<sequence>MDDFVSESESDYASYWRDWFISSRGNEYFCEIDEDYITDRFNLTGLNTEVQYYQYALDLITDVFDLDCDDDMRETIEKSARHLYGLVHARYIVTTRGLQKMFEKYKKADFGKCPRVMCSSHPLLPMGLSDVPNSKPVKLYCARCEDIYNPKSSRHAAIDGAYFGTSFHNIFFQVYPTLVPAKSVERYIPRCYGFKVHAAAALVRWQNSQRDEMRRRLRKLEVESGFKDAEDEAELDDDDEEEEEEEEEEEELAAMDEAEGAQQQHAAAAAGTATGGVAAGGEGVH</sequence>
<accession>Q8TG11</accession>
<accession>A7UW36</accession>
<accession>Q7SCY0</accession>
<keyword id="KW-0597">Phosphoprotein</keyword>
<keyword id="KW-1185">Reference proteome</keyword>
<reference key="1">
    <citation type="journal article" date="2002" name="Genes Dev.">
        <title>Regulation of the Neurospora circadian clock by casein kinase II.</title>
        <authorList>
            <person name="Yang Y."/>
            <person name="Cheng P."/>
            <person name="Liu Y."/>
        </authorList>
    </citation>
    <scope>NUCLEOTIDE SEQUENCE [MRNA]</scope>
</reference>
<reference key="2">
    <citation type="journal article" date="2003" name="Nature">
        <title>The genome sequence of the filamentous fungus Neurospora crassa.</title>
        <authorList>
            <person name="Galagan J.E."/>
            <person name="Calvo S.E."/>
            <person name="Borkovich K.A."/>
            <person name="Selker E.U."/>
            <person name="Read N.D."/>
            <person name="Jaffe D.B."/>
            <person name="FitzHugh W."/>
            <person name="Ma L.-J."/>
            <person name="Smirnov S."/>
            <person name="Purcell S."/>
            <person name="Rehman B."/>
            <person name="Elkins T."/>
            <person name="Engels R."/>
            <person name="Wang S."/>
            <person name="Nielsen C.B."/>
            <person name="Butler J."/>
            <person name="Endrizzi M."/>
            <person name="Qui D."/>
            <person name="Ianakiev P."/>
            <person name="Bell-Pedersen D."/>
            <person name="Nelson M.A."/>
            <person name="Werner-Washburne M."/>
            <person name="Selitrennikoff C.P."/>
            <person name="Kinsey J.A."/>
            <person name="Braun E.L."/>
            <person name="Zelter A."/>
            <person name="Schulte U."/>
            <person name="Kothe G.O."/>
            <person name="Jedd G."/>
            <person name="Mewes H.-W."/>
            <person name="Staben C."/>
            <person name="Marcotte E."/>
            <person name="Greenberg D."/>
            <person name="Roy A."/>
            <person name="Foley K."/>
            <person name="Naylor J."/>
            <person name="Stange-Thomann N."/>
            <person name="Barrett R."/>
            <person name="Gnerre S."/>
            <person name="Kamal M."/>
            <person name="Kamvysselis M."/>
            <person name="Mauceli E.W."/>
            <person name="Bielke C."/>
            <person name="Rudd S."/>
            <person name="Frishman D."/>
            <person name="Krystofova S."/>
            <person name="Rasmussen C."/>
            <person name="Metzenberg R.L."/>
            <person name="Perkins D.D."/>
            <person name="Kroken S."/>
            <person name="Cogoni C."/>
            <person name="Macino G."/>
            <person name="Catcheside D.E.A."/>
            <person name="Li W."/>
            <person name="Pratt R.J."/>
            <person name="Osmani S.A."/>
            <person name="DeSouza C.P.C."/>
            <person name="Glass N.L."/>
            <person name="Orbach M.J."/>
            <person name="Berglund J.A."/>
            <person name="Voelker R."/>
            <person name="Yarden O."/>
            <person name="Plamann M."/>
            <person name="Seiler S."/>
            <person name="Dunlap J.C."/>
            <person name="Radford A."/>
            <person name="Aramayo R."/>
            <person name="Natvig D.O."/>
            <person name="Alex L.A."/>
            <person name="Mannhaupt G."/>
            <person name="Ebbole D.J."/>
            <person name="Freitag M."/>
            <person name="Paulsen I."/>
            <person name="Sachs M.S."/>
            <person name="Lander E.S."/>
            <person name="Nusbaum C."/>
            <person name="Birren B.W."/>
        </authorList>
    </citation>
    <scope>NUCLEOTIDE SEQUENCE [LARGE SCALE GENOMIC DNA]</scope>
    <source>
        <strain>ATCC 24698 / 74-OR23-1A / CBS 708.71 / DSM 1257 / FGSC 987</strain>
    </source>
</reference>